<protein>
    <recommendedName>
        <fullName evidence="1">Nicotinate phosphoribosyltransferase</fullName>
        <shortName evidence="1">NAPRTase</shortName>
        <ecNumber evidence="1">6.3.4.21</ecNumber>
    </recommendedName>
</protein>
<feature type="chain" id="PRO_1000146838" description="Nicotinate phosphoribosyltransferase">
    <location>
        <begin position="1"/>
        <end position="390"/>
    </location>
</feature>
<feature type="modified residue" description="Phosphohistidine; by autocatalysis" evidence="1">
    <location>
        <position position="211"/>
    </location>
</feature>
<sequence>MLDSLLDNDFYKFTMQSAVIKRFPYARARYAFINRGEHAFPPGFGEQLREAVDAMADLSLSVEEKRFLERTCPYLDPTYLDFLSGFRYDPSEVDIVQQGERFELRIEGLWYRTILWEVPLMALISEIWYRMGDGKRDADAIIDMRTRDKIEHYKRLGLKIAEFGTRRRYSYDVHDRVVASLRHHGGDTFSGSSNVHLAMRHGVKPIGTHAHEWFMFHGARFGFKMANSLALEHWVDVYRGDLGIALTDTFTSATFFDSFDKKFAKLFDGVRHDSGDPLEFAAATIAHYERMGIDPRTKTIIFSDALTPERVERIDAFCRGRITTAFGIGTNFTNDVGVTPMNMVIKMTEARPEGQHWMPVIKLSDVPDKNTGDPDMIELAKRVLALSRRA</sequence>
<organism>
    <name type="scientific">Chromohalobacter salexigens (strain ATCC BAA-138 / DSM 3043 / CIP 106854 / NCIMB 13768 / 1H11)</name>
    <dbReference type="NCBI Taxonomy" id="290398"/>
    <lineage>
        <taxon>Bacteria</taxon>
        <taxon>Pseudomonadati</taxon>
        <taxon>Pseudomonadota</taxon>
        <taxon>Gammaproteobacteria</taxon>
        <taxon>Oceanospirillales</taxon>
        <taxon>Halomonadaceae</taxon>
        <taxon>Chromohalobacter</taxon>
    </lineage>
</organism>
<evidence type="ECO:0000255" key="1">
    <source>
        <dbReference type="HAMAP-Rule" id="MF_00570"/>
    </source>
</evidence>
<name>PNCB_CHRSD</name>
<keyword id="KW-0436">Ligase</keyword>
<keyword id="KW-0597">Phosphoprotein</keyword>
<keyword id="KW-0662">Pyridine nucleotide biosynthesis</keyword>
<keyword id="KW-1185">Reference proteome</keyword>
<reference key="1">
    <citation type="journal article" date="2011" name="Stand. Genomic Sci.">
        <title>Complete genome sequence of the halophilic and highly halotolerant Chromohalobacter salexigens type strain (1H11(T)).</title>
        <authorList>
            <person name="Copeland A."/>
            <person name="O'Connor K."/>
            <person name="Lucas S."/>
            <person name="Lapidus A."/>
            <person name="Berry K.W."/>
            <person name="Detter J.C."/>
            <person name="Del Rio T.G."/>
            <person name="Hammon N."/>
            <person name="Dalin E."/>
            <person name="Tice H."/>
            <person name="Pitluck S."/>
            <person name="Bruce D."/>
            <person name="Goodwin L."/>
            <person name="Han C."/>
            <person name="Tapia R."/>
            <person name="Saunders E."/>
            <person name="Schmutz J."/>
            <person name="Brettin T."/>
            <person name="Larimer F."/>
            <person name="Land M."/>
            <person name="Hauser L."/>
            <person name="Vargas C."/>
            <person name="Nieto J.J."/>
            <person name="Kyrpides N.C."/>
            <person name="Ivanova N."/>
            <person name="Goker M."/>
            <person name="Klenk H.P."/>
            <person name="Csonka L.N."/>
            <person name="Woyke T."/>
        </authorList>
    </citation>
    <scope>NUCLEOTIDE SEQUENCE [LARGE SCALE GENOMIC DNA]</scope>
    <source>
        <strain>ATCC BAA-138 / DSM 3043 / CIP 106854 / NCIMB 13768 / 1H11</strain>
    </source>
</reference>
<comment type="function">
    <text evidence="1">Catalyzes the synthesis of beta-nicotinate D-ribonucleotide from nicotinate and 5-phospho-D-ribose 1-phosphate at the expense of ATP.</text>
</comment>
<comment type="catalytic activity">
    <reaction evidence="1">
        <text>nicotinate + 5-phospho-alpha-D-ribose 1-diphosphate + ATP + H2O = nicotinate beta-D-ribonucleotide + ADP + phosphate + diphosphate</text>
        <dbReference type="Rhea" id="RHEA:36163"/>
        <dbReference type="ChEBI" id="CHEBI:15377"/>
        <dbReference type="ChEBI" id="CHEBI:30616"/>
        <dbReference type="ChEBI" id="CHEBI:32544"/>
        <dbReference type="ChEBI" id="CHEBI:33019"/>
        <dbReference type="ChEBI" id="CHEBI:43474"/>
        <dbReference type="ChEBI" id="CHEBI:57502"/>
        <dbReference type="ChEBI" id="CHEBI:58017"/>
        <dbReference type="ChEBI" id="CHEBI:456216"/>
        <dbReference type="EC" id="6.3.4.21"/>
    </reaction>
</comment>
<comment type="pathway">
    <text evidence="1">Cofactor biosynthesis; NAD(+) biosynthesis; nicotinate D-ribonucleotide from nicotinate: step 1/1.</text>
</comment>
<comment type="PTM">
    <text evidence="1">Transiently phosphorylated on a His residue during the reaction cycle. Phosphorylation strongly increases the affinity for substrates and increases the rate of nicotinate D-ribonucleotide production. Dephosphorylation regenerates the low-affinity form of the enzyme, leading to product release.</text>
</comment>
<comment type="similarity">
    <text evidence="1">Belongs to the NAPRTase family.</text>
</comment>
<accession>Q1QZ10</accession>
<dbReference type="EC" id="6.3.4.21" evidence="1"/>
<dbReference type="EMBL" id="CP000285">
    <property type="protein sequence ID" value="ABE58298.1"/>
    <property type="molecule type" value="Genomic_DNA"/>
</dbReference>
<dbReference type="RefSeq" id="WP_011506244.1">
    <property type="nucleotide sequence ID" value="NC_007963.1"/>
</dbReference>
<dbReference type="SMR" id="Q1QZ10"/>
<dbReference type="STRING" id="290398.Csal_0941"/>
<dbReference type="GeneID" id="95333697"/>
<dbReference type="KEGG" id="csa:Csal_0941"/>
<dbReference type="eggNOG" id="COG1488">
    <property type="taxonomic scope" value="Bacteria"/>
</dbReference>
<dbReference type="HOGENOM" id="CLU_030991_1_0_6"/>
<dbReference type="OrthoDB" id="9771406at2"/>
<dbReference type="UniPathway" id="UPA00253">
    <property type="reaction ID" value="UER00457"/>
</dbReference>
<dbReference type="Proteomes" id="UP000000239">
    <property type="component" value="Chromosome"/>
</dbReference>
<dbReference type="GO" id="GO:0005829">
    <property type="term" value="C:cytosol"/>
    <property type="evidence" value="ECO:0007669"/>
    <property type="project" value="TreeGrafter"/>
</dbReference>
<dbReference type="GO" id="GO:0004516">
    <property type="term" value="F:nicotinate phosphoribosyltransferase activity"/>
    <property type="evidence" value="ECO:0007669"/>
    <property type="project" value="UniProtKB-UniRule"/>
</dbReference>
<dbReference type="GO" id="GO:0034355">
    <property type="term" value="P:NAD biosynthetic process via the salvage pathway"/>
    <property type="evidence" value="ECO:0007669"/>
    <property type="project" value="TreeGrafter"/>
</dbReference>
<dbReference type="Gene3D" id="3.20.140.10">
    <property type="entry name" value="nicotinate phosphoribosyltransferase"/>
    <property type="match status" value="1"/>
</dbReference>
<dbReference type="HAMAP" id="MF_00570">
    <property type="entry name" value="NAPRTase"/>
    <property type="match status" value="1"/>
</dbReference>
<dbReference type="InterPro" id="IPR041525">
    <property type="entry name" value="N/Namide_PRibTrfase"/>
</dbReference>
<dbReference type="InterPro" id="IPR040727">
    <property type="entry name" value="NAPRTase_N"/>
</dbReference>
<dbReference type="InterPro" id="IPR006406">
    <property type="entry name" value="Nic_PRibTrfase"/>
</dbReference>
<dbReference type="InterPro" id="IPR007229">
    <property type="entry name" value="Nic_PRibTrfase-Fam"/>
</dbReference>
<dbReference type="InterPro" id="IPR036068">
    <property type="entry name" value="Nicotinate_pribotase-like_C"/>
</dbReference>
<dbReference type="NCBIfam" id="TIGR01514">
    <property type="entry name" value="NAPRTase"/>
    <property type="match status" value="1"/>
</dbReference>
<dbReference type="NCBIfam" id="NF003704">
    <property type="entry name" value="PRK05321.1"/>
    <property type="match status" value="1"/>
</dbReference>
<dbReference type="PANTHER" id="PTHR11098">
    <property type="entry name" value="NICOTINATE PHOSPHORIBOSYLTRANSFERASE"/>
    <property type="match status" value="1"/>
</dbReference>
<dbReference type="PANTHER" id="PTHR11098:SF1">
    <property type="entry name" value="NICOTINATE PHOSPHORIBOSYLTRANSFERASE"/>
    <property type="match status" value="1"/>
</dbReference>
<dbReference type="Pfam" id="PF04095">
    <property type="entry name" value="NAPRTase"/>
    <property type="match status" value="1"/>
</dbReference>
<dbReference type="Pfam" id="PF17767">
    <property type="entry name" value="NAPRTase_N"/>
    <property type="match status" value="1"/>
</dbReference>
<dbReference type="PIRSF" id="PIRSF000484">
    <property type="entry name" value="NAPRT"/>
    <property type="match status" value="1"/>
</dbReference>
<dbReference type="SUPFAM" id="SSF51690">
    <property type="entry name" value="Nicotinate/Quinolinate PRTase C-terminal domain-like"/>
    <property type="match status" value="1"/>
</dbReference>
<dbReference type="SUPFAM" id="SSF54675">
    <property type="entry name" value="Nicotinate/Quinolinate PRTase N-terminal domain-like"/>
    <property type="match status" value="1"/>
</dbReference>
<gene>
    <name evidence="1" type="primary">pncB</name>
    <name type="ordered locus">Csal_0941</name>
</gene>
<proteinExistence type="inferred from homology"/>